<name>RNC_RICB8</name>
<protein>
    <recommendedName>
        <fullName evidence="1">Ribonuclease 3</fullName>
        <ecNumber evidence="1">3.1.26.3</ecNumber>
    </recommendedName>
    <alternativeName>
        <fullName evidence="1">Ribonuclease III</fullName>
        <shortName evidence="1">RNase III</shortName>
    </alternativeName>
</protein>
<dbReference type="EC" id="3.1.26.3" evidence="1"/>
<dbReference type="EMBL" id="CP000849">
    <property type="protein sequence ID" value="ABV78667.1"/>
    <property type="molecule type" value="Genomic_DNA"/>
</dbReference>
<dbReference type="RefSeq" id="WP_011477840.1">
    <property type="nucleotide sequence ID" value="NC_009883.1"/>
</dbReference>
<dbReference type="SMR" id="A8GYE2"/>
<dbReference type="KEGG" id="rbo:A1I_01375"/>
<dbReference type="HOGENOM" id="CLU_000907_1_1_5"/>
<dbReference type="GO" id="GO:0005737">
    <property type="term" value="C:cytoplasm"/>
    <property type="evidence" value="ECO:0007669"/>
    <property type="project" value="UniProtKB-SubCell"/>
</dbReference>
<dbReference type="GO" id="GO:0003725">
    <property type="term" value="F:double-stranded RNA binding"/>
    <property type="evidence" value="ECO:0007669"/>
    <property type="project" value="TreeGrafter"/>
</dbReference>
<dbReference type="GO" id="GO:0046872">
    <property type="term" value="F:metal ion binding"/>
    <property type="evidence" value="ECO:0007669"/>
    <property type="project" value="UniProtKB-KW"/>
</dbReference>
<dbReference type="GO" id="GO:0004525">
    <property type="term" value="F:ribonuclease III activity"/>
    <property type="evidence" value="ECO:0007669"/>
    <property type="project" value="UniProtKB-UniRule"/>
</dbReference>
<dbReference type="GO" id="GO:0019843">
    <property type="term" value="F:rRNA binding"/>
    <property type="evidence" value="ECO:0007669"/>
    <property type="project" value="UniProtKB-KW"/>
</dbReference>
<dbReference type="GO" id="GO:0006397">
    <property type="term" value="P:mRNA processing"/>
    <property type="evidence" value="ECO:0007669"/>
    <property type="project" value="UniProtKB-UniRule"/>
</dbReference>
<dbReference type="GO" id="GO:0010468">
    <property type="term" value="P:regulation of gene expression"/>
    <property type="evidence" value="ECO:0007669"/>
    <property type="project" value="TreeGrafter"/>
</dbReference>
<dbReference type="GO" id="GO:0006364">
    <property type="term" value="P:rRNA processing"/>
    <property type="evidence" value="ECO:0007669"/>
    <property type="project" value="UniProtKB-UniRule"/>
</dbReference>
<dbReference type="GO" id="GO:0008033">
    <property type="term" value="P:tRNA processing"/>
    <property type="evidence" value="ECO:0007669"/>
    <property type="project" value="UniProtKB-KW"/>
</dbReference>
<dbReference type="CDD" id="cd10845">
    <property type="entry name" value="DSRM_RNAse_III_family"/>
    <property type="match status" value="1"/>
</dbReference>
<dbReference type="CDD" id="cd00593">
    <property type="entry name" value="RIBOc"/>
    <property type="match status" value="1"/>
</dbReference>
<dbReference type="FunFam" id="1.10.1520.10:FF:000001">
    <property type="entry name" value="Ribonuclease 3"/>
    <property type="match status" value="1"/>
</dbReference>
<dbReference type="Gene3D" id="3.30.160.20">
    <property type="match status" value="1"/>
</dbReference>
<dbReference type="Gene3D" id="1.10.1520.10">
    <property type="entry name" value="Ribonuclease III domain"/>
    <property type="match status" value="1"/>
</dbReference>
<dbReference type="HAMAP" id="MF_00104">
    <property type="entry name" value="RNase_III"/>
    <property type="match status" value="1"/>
</dbReference>
<dbReference type="InterPro" id="IPR014720">
    <property type="entry name" value="dsRBD_dom"/>
</dbReference>
<dbReference type="InterPro" id="IPR011907">
    <property type="entry name" value="RNase_III"/>
</dbReference>
<dbReference type="InterPro" id="IPR000999">
    <property type="entry name" value="RNase_III_dom"/>
</dbReference>
<dbReference type="InterPro" id="IPR036389">
    <property type="entry name" value="RNase_III_sf"/>
</dbReference>
<dbReference type="NCBIfam" id="TIGR02191">
    <property type="entry name" value="RNaseIII"/>
    <property type="match status" value="1"/>
</dbReference>
<dbReference type="PANTHER" id="PTHR11207:SF0">
    <property type="entry name" value="RIBONUCLEASE 3"/>
    <property type="match status" value="1"/>
</dbReference>
<dbReference type="PANTHER" id="PTHR11207">
    <property type="entry name" value="RIBONUCLEASE III"/>
    <property type="match status" value="1"/>
</dbReference>
<dbReference type="Pfam" id="PF00035">
    <property type="entry name" value="dsrm"/>
    <property type="match status" value="1"/>
</dbReference>
<dbReference type="Pfam" id="PF14622">
    <property type="entry name" value="Ribonucleas_3_3"/>
    <property type="match status" value="1"/>
</dbReference>
<dbReference type="SMART" id="SM00358">
    <property type="entry name" value="DSRM"/>
    <property type="match status" value="1"/>
</dbReference>
<dbReference type="SMART" id="SM00535">
    <property type="entry name" value="RIBOc"/>
    <property type="match status" value="1"/>
</dbReference>
<dbReference type="SUPFAM" id="SSF54768">
    <property type="entry name" value="dsRNA-binding domain-like"/>
    <property type="match status" value="1"/>
</dbReference>
<dbReference type="SUPFAM" id="SSF69065">
    <property type="entry name" value="RNase III domain-like"/>
    <property type="match status" value="1"/>
</dbReference>
<dbReference type="PROSITE" id="PS50137">
    <property type="entry name" value="DS_RBD"/>
    <property type="match status" value="1"/>
</dbReference>
<dbReference type="PROSITE" id="PS00517">
    <property type="entry name" value="RNASE_3_1"/>
    <property type="match status" value="1"/>
</dbReference>
<dbReference type="PROSITE" id="PS50142">
    <property type="entry name" value="RNASE_3_2"/>
    <property type="match status" value="1"/>
</dbReference>
<organism>
    <name type="scientific">Rickettsia bellii (strain OSU 85-389)</name>
    <dbReference type="NCBI Taxonomy" id="391896"/>
    <lineage>
        <taxon>Bacteria</taxon>
        <taxon>Pseudomonadati</taxon>
        <taxon>Pseudomonadota</taxon>
        <taxon>Alphaproteobacteria</taxon>
        <taxon>Rickettsiales</taxon>
        <taxon>Rickettsiaceae</taxon>
        <taxon>Rickettsieae</taxon>
        <taxon>Rickettsia</taxon>
        <taxon>belli group</taxon>
    </lineage>
</organism>
<sequence>MESFEELEKLLDYSFKNKALLTEALSHPSLRQHHEYKANKDYERLEFLGDAVLNLIITEILFNNFKEYNEGNLAKIRSYLVCKETICVVGAKLGLKNYIIMTHGEEIAGGRDNPNNIENVTEALIAAIYLDSDITTIHNIIGKLWAEFIKVKDLTDYDPKTALQEWAQSKDHHIPIYRLIKREGVAHLSTFTVSVKINGYEQTGKGHSIKEAEKNAARELLHKLKLL</sequence>
<comment type="function">
    <text evidence="1">Digests double-stranded RNA. Involved in the processing of primary rRNA transcript to yield the immediate precursors to the large and small rRNAs (23S and 16S). Processes some mRNAs, and tRNAs when they are encoded in the rRNA operon. Processes pre-crRNA and tracrRNA of type II CRISPR loci if present in the organism.</text>
</comment>
<comment type="catalytic activity">
    <reaction evidence="1">
        <text>Endonucleolytic cleavage to 5'-phosphomonoester.</text>
        <dbReference type="EC" id="3.1.26.3"/>
    </reaction>
</comment>
<comment type="cofactor">
    <cofactor evidence="1">
        <name>Mg(2+)</name>
        <dbReference type="ChEBI" id="CHEBI:18420"/>
    </cofactor>
</comment>
<comment type="subunit">
    <text evidence="1">Homodimer.</text>
</comment>
<comment type="subcellular location">
    <subcellularLocation>
        <location evidence="1">Cytoplasm</location>
    </subcellularLocation>
</comment>
<comment type="similarity">
    <text evidence="1">Belongs to the ribonuclease III family.</text>
</comment>
<feature type="chain" id="PRO_1000075801" description="Ribonuclease 3">
    <location>
        <begin position="1"/>
        <end position="227"/>
    </location>
</feature>
<feature type="domain" description="RNase III" evidence="1">
    <location>
        <begin position="4"/>
        <end position="133"/>
    </location>
</feature>
<feature type="domain" description="DRBM" evidence="1">
    <location>
        <begin position="158"/>
        <end position="226"/>
    </location>
</feature>
<feature type="active site" evidence="1">
    <location>
        <position position="50"/>
    </location>
</feature>
<feature type="active site" evidence="1">
    <location>
        <position position="122"/>
    </location>
</feature>
<feature type="binding site" evidence="1">
    <location>
        <position position="46"/>
    </location>
    <ligand>
        <name>Mg(2+)</name>
        <dbReference type="ChEBI" id="CHEBI:18420"/>
    </ligand>
</feature>
<feature type="binding site" evidence="1">
    <location>
        <position position="119"/>
    </location>
    <ligand>
        <name>Mg(2+)</name>
        <dbReference type="ChEBI" id="CHEBI:18420"/>
    </ligand>
</feature>
<feature type="binding site" evidence="1">
    <location>
        <position position="122"/>
    </location>
    <ligand>
        <name>Mg(2+)</name>
        <dbReference type="ChEBI" id="CHEBI:18420"/>
    </ligand>
</feature>
<proteinExistence type="inferred from homology"/>
<accession>A8GYE2</accession>
<evidence type="ECO:0000255" key="1">
    <source>
        <dbReference type="HAMAP-Rule" id="MF_00104"/>
    </source>
</evidence>
<reference key="1">
    <citation type="submission" date="2007-09" db="EMBL/GenBank/DDBJ databases">
        <title>Complete genome sequencing of Rickettsia bellii.</title>
        <authorList>
            <person name="Madan A."/>
            <person name="Lee H."/>
            <person name="Madan A."/>
            <person name="Yoon J.-G."/>
            <person name="Ryu G.-Y."/>
            <person name="Dasch G."/>
            <person name="Ereemeva M."/>
        </authorList>
    </citation>
    <scope>NUCLEOTIDE SEQUENCE [LARGE SCALE GENOMIC DNA]</scope>
    <source>
        <strain>OSU 85-389</strain>
    </source>
</reference>
<gene>
    <name evidence="1" type="primary">rnc</name>
    <name type="ordered locus">A1I_01375</name>
</gene>
<keyword id="KW-0963">Cytoplasm</keyword>
<keyword id="KW-0255">Endonuclease</keyword>
<keyword id="KW-0378">Hydrolase</keyword>
<keyword id="KW-0460">Magnesium</keyword>
<keyword id="KW-0479">Metal-binding</keyword>
<keyword id="KW-0507">mRNA processing</keyword>
<keyword id="KW-0540">Nuclease</keyword>
<keyword id="KW-0694">RNA-binding</keyword>
<keyword id="KW-0698">rRNA processing</keyword>
<keyword id="KW-0699">rRNA-binding</keyword>
<keyword id="KW-0819">tRNA processing</keyword>